<keyword id="KW-0012">Acyltransferase</keyword>
<keyword id="KW-0028">Amino-acid biosynthesis</keyword>
<keyword id="KW-0963">Cytoplasm</keyword>
<keyword id="KW-0486">Methionine biosynthesis</keyword>
<keyword id="KW-0808">Transferase</keyword>
<sequence>MPVKIPDHLPAAGILESENIFVMSETRAANQDIRPMKVLILNLMPNKIETETQLLRLLGNTPLQVDVDLLRIHDKESKHTSIDHMNTFYRDFEDVRHKNYDGLIITGAPLGQIDFEEVTYWDHIREIIDWSQQHVTSVLFLCWAAHAGLYHLYGLNRKILQQKRSGVFVHRRTCQHFPLLRGFDDEFFAPHSRFAEMDIEELKQHSELQVLAQSDEAGAYLVLSRNNRNLFVMGHPEYQKSTLNDEYHRDLAQGLNPNVPQNYYRNDDPKDDAIARWHSHGSLLVSNWLNYYVYQLTPYDLSDMSAVTPWESQ</sequence>
<proteinExistence type="inferred from homology"/>
<name>METAS_SHESA</name>
<gene>
    <name evidence="1" type="primary">metAS</name>
    <name type="ordered locus">Shewana3_2772</name>
</gene>
<dbReference type="EC" id="2.3.1.46" evidence="1"/>
<dbReference type="EMBL" id="CP000469">
    <property type="protein sequence ID" value="ABK48999.1"/>
    <property type="molecule type" value="Genomic_DNA"/>
</dbReference>
<dbReference type="RefSeq" id="WP_011717651.1">
    <property type="nucleotide sequence ID" value="NC_008577.1"/>
</dbReference>
<dbReference type="SMR" id="A0KYY0"/>
<dbReference type="STRING" id="94122.Shewana3_2772"/>
<dbReference type="KEGG" id="shn:Shewana3_2772"/>
<dbReference type="eggNOG" id="COG1897">
    <property type="taxonomic scope" value="Bacteria"/>
</dbReference>
<dbReference type="HOGENOM" id="CLU_057851_0_1_6"/>
<dbReference type="OrthoDB" id="9772423at2"/>
<dbReference type="UniPathway" id="UPA00051">
    <property type="reaction ID" value="UER00075"/>
</dbReference>
<dbReference type="Proteomes" id="UP000002589">
    <property type="component" value="Chromosome"/>
</dbReference>
<dbReference type="GO" id="GO:0005737">
    <property type="term" value="C:cytoplasm"/>
    <property type="evidence" value="ECO:0007669"/>
    <property type="project" value="UniProtKB-SubCell"/>
</dbReference>
<dbReference type="GO" id="GO:0004414">
    <property type="term" value="F:homoserine O-acetyltransferase activity"/>
    <property type="evidence" value="ECO:0007669"/>
    <property type="project" value="UniProtKB-UniRule"/>
</dbReference>
<dbReference type="GO" id="GO:0008899">
    <property type="term" value="F:homoserine O-succinyltransferase activity"/>
    <property type="evidence" value="ECO:0007669"/>
    <property type="project" value="UniProtKB-EC"/>
</dbReference>
<dbReference type="GO" id="GO:0019281">
    <property type="term" value="P:L-methionine biosynthetic process from homoserine via O-succinyl-L-homoserine and cystathionine"/>
    <property type="evidence" value="ECO:0007669"/>
    <property type="project" value="InterPro"/>
</dbReference>
<dbReference type="CDD" id="cd03131">
    <property type="entry name" value="GATase1_HTS"/>
    <property type="match status" value="1"/>
</dbReference>
<dbReference type="FunFam" id="3.40.50.880:FF:000004">
    <property type="entry name" value="Homoserine O-succinyltransferase"/>
    <property type="match status" value="1"/>
</dbReference>
<dbReference type="Gene3D" id="3.40.50.880">
    <property type="match status" value="1"/>
</dbReference>
<dbReference type="HAMAP" id="MF_00295">
    <property type="entry name" value="MetA_acyltransf"/>
    <property type="match status" value="1"/>
</dbReference>
<dbReference type="InterPro" id="IPR029062">
    <property type="entry name" value="Class_I_gatase-like"/>
</dbReference>
<dbReference type="InterPro" id="IPR005697">
    <property type="entry name" value="HST_MetA"/>
</dbReference>
<dbReference type="InterPro" id="IPR033752">
    <property type="entry name" value="MetA_family"/>
</dbReference>
<dbReference type="NCBIfam" id="TIGR01001">
    <property type="entry name" value="metA"/>
    <property type="match status" value="1"/>
</dbReference>
<dbReference type="PANTHER" id="PTHR20919">
    <property type="entry name" value="HOMOSERINE O-SUCCINYLTRANSFERASE"/>
    <property type="match status" value="1"/>
</dbReference>
<dbReference type="PANTHER" id="PTHR20919:SF0">
    <property type="entry name" value="HOMOSERINE O-SUCCINYLTRANSFERASE"/>
    <property type="match status" value="1"/>
</dbReference>
<dbReference type="Pfam" id="PF04204">
    <property type="entry name" value="HTS"/>
    <property type="match status" value="1"/>
</dbReference>
<dbReference type="PIRSF" id="PIRSF000450">
    <property type="entry name" value="H_ser_succinyltr"/>
    <property type="match status" value="1"/>
</dbReference>
<dbReference type="SUPFAM" id="SSF52317">
    <property type="entry name" value="Class I glutamine amidotransferase-like"/>
    <property type="match status" value="1"/>
</dbReference>
<organism>
    <name type="scientific">Shewanella sp. (strain ANA-3)</name>
    <dbReference type="NCBI Taxonomy" id="94122"/>
    <lineage>
        <taxon>Bacteria</taxon>
        <taxon>Pseudomonadati</taxon>
        <taxon>Pseudomonadota</taxon>
        <taxon>Gammaproteobacteria</taxon>
        <taxon>Alteromonadales</taxon>
        <taxon>Shewanellaceae</taxon>
        <taxon>Shewanella</taxon>
    </lineage>
</organism>
<feature type="chain" id="PRO_1000021839" description="Homoserine O-succinyltransferase">
    <location>
        <begin position="1"/>
        <end position="313"/>
    </location>
</feature>
<feature type="active site" description="Acyl-thioester intermediate" evidence="1">
    <location>
        <position position="142"/>
    </location>
</feature>
<feature type="active site" description="Proton acceptor" evidence="1">
    <location>
        <position position="235"/>
    </location>
</feature>
<feature type="active site" evidence="1">
    <location>
        <position position="237"/>
    </location>
</feature>
<feature type="binding site" evidence="1">
    <location>
        <position position="163"/>
    </location>
    <ligand>
        <name>substrate</name>
    </ligand>
</feature>
<feature type="binding site" evidence="1">
    <location>
        <position position="192"/>
    </location>
    <ligand>
        <name>substrate</name>
    </ligand>
</feature>
<feature type="binding site" evidence="1">
    <location>
        <position position="249"/>
    </location>
    <ligand>
        <name>substrate</name>
    </ligand>
</feature>
<feature type="site" description="Important for acyl-CoA specificity" evidence="1">
    <location>
        <position position="111"/>
    </location>
</feature>
<feature type="site" description="Important for substrate specificity" evidence="1">
    <location>
        <position position="192"/>
    </location>
</feature>
<comment type="function">
    <text evidence="1">Transfers a succinyl group from succinyl-CoA to L-homoserine, forming succinyl-L-homoserine.</text>
</comment>
<comment type="catalytic activity">
    <reaction evidence="1">
        <text>L-homoserine + succinyl-CoA = O-succinyl-L-homoserine + CoA</text>
        <dbReference type="Rhea" id="RHEA:22008"/>
        <dbReference type="ChEBI" id="CHEBI:57287"/>
        <dbReference type="ChEBI" id="CHEBI:57292"/>
        <dbReference type="ChEBI" id="CHEBI:57476"/>
        <dbReference type="ChEBI" id="CHEBI:57661"/>
        <dbReference type="EC" id="2.3.1.46"/>
    </reaction>
</comment>
<comment type="pathway">
    <text evidence="1">Amino-acid biosynthesis; L-methionine biosynthesis via de novo pathway; O-succinyl-L-homoserine from L-homoserine: step 1/1.</text>
</comment>
<comment type="subcellular location">
    <subcellularLocation>
        <location evidence="1">Cytoplasm</location>
    </subcellularLocation>
</comment>
<comment type="similarity">
    <text evidence="1">Belongs to the MetA family.</text>
</comment>
<evidence type="ECO:0000255" key="1">
    <source>
        <dbReference type="HAMAP-Rule" id="MF_00295"/>
    </source>
</evidence>
<accession>A0KYY0</accession>
<protein>
    <recommendedName>
        <fullName evidence="1">Homoserine O-succinyltransferase</fullName>
        <shortName evidence="1">HST</shortName>
        <ecNumber evidence="1">2.3.1.46</ecNumber>
    </recommendedName>
    <alternativeName>
        <fullName evidence="1">Homoserine transsuccinylase</fullName>
        <shortName evidence="1">HTS</shortName>
    </alternativeName>
</protein>
<reference key="1">
    <citation type="submission" date="2006-09" db="EMBL/GenBank/DDBJ databases">
        <title>Complete sequence of chromosome 1 of Shewanella sp. ANA-3.</title>
        <authorList>
            <person name="Copeland A."/>
            <person name="Lucas S."/>
            <person name="Lapidus A."/>
            <person name="Barry K."/>
            <person name="Detter J.C."/>
            <person name="Glavina del Rio T."/>
            <person name="Hammon N."/>
            <person name="Israni S."/>
            <person name="Dalin E."/>
            <person name="Tice H."/>
            <person name="Pitluck S."/>
            <person name="Chertkov O."/>
            <person name="Brettin T."/>
            <person name="Bruce D."/>
            <person name="Han C."/>
            <person name="Tapia R."/>
            <person name="Gilna P."/>
            <person name="Schmutz J."/>
            <person name="Larimer F."/>
            <person name="Land M."/>
            <person name="Hauser L."/>
            <person name="Kyrpides N."/>
            <person name="Kim E."/>
            <person name="Newman D."/>
            <person name="Salticov C."/>
            <person name="Konstantinidis K."/>
            <person name="Klappenback J."/>
            <person name="Tiedje J."/>
            <person name="Richardson P."/>
        </authorList>
    </citation>
    <scope>NUCLEOTIDE SEQUENCE [LARGE SCALE GENOMIC DNA]</scope>
    <source>
        <strain>ANA-3</strain>
    </source>
</reference>